<feature type="chain" id="PRO_0000236529" description="Large ribosomal subunit protein bL9">
    <location>
        <begin position="1"/>
        <end position="196"/>
    </location>
</feature>
<dbReference type="EMBL" id="CP000009">
    <property type="protein sequence ID" value="AAW60087.1"/>
    <property type="molecule type" value="Genomic_DNA"/>
</dbReference>
<dbReference type="RefSeq" id="WP_011251890.1">
    <property type="nucleotide sequence ID" value="NZ_LT900338.1"/>
</dbReference>
<dbReference type="SMR" id="Q5FU59"/>
<dbReference type="STRING" id="290633.GOX0304"/>
<dbReference type="GeneID" id="56904572"/>
<dbReference type="KEGG" id="gox:GOX0304"/>
<dbReference type="eggNOG" id="COG0359">
    <property type="taxonomic scope" value="Bacteria"/>
</dbReference>
<dbReference type="HOGENOM" id="CLU_078938_1_0_5"/>
<dbReference type="Proteomes" id="UP000006375">
    <property type="component" value="Chromosome"/>
</dbReference>
<dbReference type="GO" id="GO:1990904">
    <property type="term" value="C:ribonucleoprotein complex"/>
    <property type="evidence" value="ECO:0007669"/>
    <property type="project" value="UniProtKB-KW"/>
</dbReference>
<dbReference type="GO" id="GO:0005840">
    <property type="term" value="C:ribosome"/>
    <property type="evidence" value="ECO:0007669"/>
    <property type="project" value="UniProtKB-KW"/>
</dbReference>
<dbReference type="GO" id="GO:0019843">
    <property type="term" value="F:rRNA binding"/>
    <property type="evidence" value="ECO:0007669"/>
    <property type="project" value="UniProtKB-UniRule"/>
</dbReference>
<dbReference type="GO" id="GO:0003735">
    <property type="term" value="F:structural constituent of ribosome"/>
    <property type="evidence" value="ECO:0007669"/>
    <property type="project" value="InterPro"/>
</dbReference>
<dbReference type="GO" id="GO:0006412">
    <property type="term" value="P:translation"/>
    <property type="evidence" value="ECO:0007669"/>
    <property type="project" value="UniProtKB-UniRule"/>
</dbReference>
<dbReference type="Gene3D" id="3.10.430.100">
    <property type="entry name" value="Ribosomal protein L9, C-terminal domain"/>
    <property type="match status" value="1"/>
</dbReference>
<dbReference type="Gene3D" id="3.40.5.10">
    <property type="entry name" value="Ribosomal protein L9, N-terminal domain"/>
    <property type="match status" value="1"/>
</dbReference>
<dbReference type="HAMAP" id="MF_00503">
    <property type="entry name" value="Ribosomal_bL9"/>
    <property type="match status" value="1"/>
</dbReference>
<dbReference type="InterPro" id="IPR000244">
    <property type="entry name" value="Ribosomal_bL9"/>
</dbReference>
<dbReference type="InterPro" id="IPR009027">
    <property type="entry name" value="Ribosomal_bL9/RNase_H1_N"/>
</dbReference>
<dbReference type="InterPro" id="IPR020594">
    <property type="entry name" value="Ribosomal_bL9_bac/chp"/>
</dbReference>
<dbReference type="InterPro" id="IPR020069">
    <property type="entry name" value="Ribosomal_bL9_C"/>
</dbReference>
<dbReference type="InterPro" id="IPR036791">
    <property type="entry name" value="Ribosomal_bL9_C_sf"/>
</dbReference>
<dbReference type="InterPro" id="IPR020070">
    <property type="entry name" value="Ribosomal_bL9_N"/>
</dbReference>
<dbReference type="InterPro" id="IPR036935">
    <property type="entry name" value="Ribosomal_bL9_N_sf"/>
</dbReference>
<dbReference type="NCBIfam" id="TIGR00158">
    <property type="entry name" value="L9"/>
    <property type="match status" value="1"/>
</dbReference>
<dbReference type="PANTHER" id="PTHR21368">
    <property type="entry name" value="50S RIBOSOMAL PROTEIN L9"/>
    <property type="match status" value="1"/>
</dbReference>
<dbReference type="Pfam" id="PF03948">
    <property type="entry name" value="Ribosomal_L9_C"/>
    <property type="match status" value="1"/>
</dbReference>
<dbReference type="Pfam" id="PF01281">
    <property type="entry name" value="Ribosomal_L9_N"/>
    <property type="match status" value="1"/>
</dbReference>
<dbReference type="SUPFAM" id="SSF55658">
    <property type="entry name" value="L9 N-domain-like"/>
    <property type="match status" value="1"/>
</dbReference>
<dbReference type="SUPFAM" id="SSF55653">
    <property type="entry name" value="Ribosomal protein L9 C-domain"/>
    <property type="match status" value="1"/>
</dbReference>
<dbReference type="PROSITE" id="PS00651">
    <property type="entry name" value="RIBOSOMAL_L9"/>
    <property type="match status" value="1"/>
</dbReference>
<keyword id="KW-1185">Reference proteome</keyword>
<keyword id="KW-0687">Ribonucleoprotein</keyword>
<keyword id="KW-0689">Ribosomal protein</keyword>
<keyword id="KW-0694">RNA-binding</keyword>
<keyword id="KW-0699">rRNA-binding</keyword>
<reference key="1">
    <citation type="journal article" date="2005" name="Nat. Biotechnol.">
        <title>Complete genome sequence of the acetic acid bacterium Gluconobacter oxydans.</title>
        <authorList>
            <person name="Prust C."/>
            <person name="Hoffmeister M."/>
            <person name="Liesegang H."/>
            <person name="Wiezer A."/>
            <person name="Fricke W.F."/>
            <person name="Ehrenreich A."/>
            <person name="Gottschalk G."/>
            <person name="Deppenmeier U."/>
        </authorList>
    </citation>
    <scope>NUCLEOTIDE SEQUENCE [LARGE SCALE GENOMIC DNA]</scope>
    <source>
        <strain>621H</strain>
    </source>
</reference>
<accession>Q5FU59</accession>
<gene>
    <name evidence="1" type="primary">rplI</name>
    <name type="ordered locus">GOX0304</name>
</gene>
<name>RL9_GLUOX</name>
<organism>
    <name type="scientific">Gluconobacter oxydans (strain 621H)</name>
    <name type="common">Gluconobacter suboxydans</name>
    <dbReference type="NCBI Taxonomy" id="290633"/>
    <lineage>
        <taxon>Bacteria</taxon>
        <taxon>Pseudomonadati</taxon>
        <taxon>Pseudomonadota</taxon>
        <taxon>Alphaproteobacteria</taxon>
        <taxon>Acetobacterales</taxon>
        <taxon>Acetobacteraceae</taxon>
        <taxon>Gluconobacter</taxon>
    </lineage>
</organism>
<comment type="function">
    <text evidence="1">Binds to the 23S rRNA.</text>
</comment>
<comment type="similarity">
    <text evidence="1">Belongs to the bacterial ribosomal protein bL9 family.</text>
</comment>
<proteinExistence type="inferred from homology"/>
<protein>
    <recommendedName>
        <fullName evidence="1">Large ribosomal subunit protein bL9</fullName>
    </recommendedName>
    <alternativeName>
        <fullName evidence="2">50S ribosomal protein L9</fullName>
    </alternativeName>
</protein>
<evidence type="ECO:0000255" key="1">
    <source>
        <dbReference type="HAMAP-Rule" id="MF_00503"/>
    </source>
</evidence>
<evidence type="ECO:0000305" key="2"/>
<sequence>MSQTALILLQRVEHLGQMGDLVHVKPGYARNFLLPQAKAMRATAANKKRFETERAQLEAQNLKKREEAERLAERMHELSVVIIRQAGDSGSLYGSVSTRDIAAAATEAGLTISRQQVVLAHPIKQLGLTEARIVLHPEVSIPLTVNVARSAEEAERQARGEAIGVQDEDENILGELQAENAAEEAAAEAAEASEEA</sequence>